<reference key="1">
    <citation type="journal article" date="2008" name="Genome Res.">
        <title>Comparative genome analysis of Salmonella enteritidis PT4 and Salmonella gallinarum 287/91 provides insights into evolutionary and host adaptation pathways.</title>
        <authorList>
            <person name="Thomson N.R."/>
            <person name="Clayton D.J."/>
            <person name="Windhorst D."/>
            <person name="Vernikos G."/>
            <person name="Davidson S."/>
            <person name="Churcher C."/>
            <person name="Quail M.A."/>
            <person name="Stevens M."/>
            <person name="Jones M.A."/>
            <person name="Watson M."/>
            <person name="Barron A."/>
            <person name="Layton A."/>
            <person name="Pickard D."/>
            <person name="Kingsley R.A."/>
            <person name="Bignell A."/>
            <person name="Clark L."/>
            <person name="Harris B."/>
            <person name="Ormond D."/>
            <person name="Abdellah Z."/>
            <person name="Brooks K."/>
            <person name="Cherevach I."/>
            <person name="Chillingworth T."/>
            <person name="Woodward J."/>
            <person name="Norberczak H."/>
            <person name="Lord A."/>
            <person name="Arrowsmith C."/>
            <person name="Jagels K."/>
            <person name="Moule S."/>
            <person name="Mungall K."/>
            <person name="Saunders M."/>
            <person name="Whitehead S."/>
            <person name="Chabalgoity J.A."/>
            <person name="Maskell D."/>
            <person name="Humphreys T."/>
            <person name="Roberts M."/>
            <person name="Barrow P.A."/>
            <person name="Dougan G."/>
            <person name="Parkhill J."/>
        </authorList>
    </citation>
    <scope>NUCLEOTIDE SEQUENCE [LARGE SCALE GENOMIC DNA]</scope>
    <source>
        <strain>P125109</strain>
    </source>
</reference>
<comment type="function">
    <text evidence="2">Displays esterase activity towards short chain fatty esters (acyl chain length of up to 8 carbons). Able to hydrolyze triacetylglycerol (triacetin) and tributyrylglycerol (tributyrin), but not trioleylglycerol (triolein) or cholesterol oleate. Negatively regulates MalT activity by antagonizing maltotriose binding. Inhibits MelA galactosidase activity.</text>
</comment>
<comment type="subunit">
    <text evidence="2">Homodimer. Interacts with MalT and MelA.</text>
</comment>
<comment type="subcellular location">
    <subcellularLocation>
        <location evidence="2">Cytoplasm</location>
    </subcellularLocation>
</comment>
<comment type="similarity">
    <text evidence="2">Belongs to the 'GDXG' lipolytic enzyme family.</text>
</comment>
<accession>B5QU79</accession>
<protein>
    <recommendedName>
        <fullName evidence="2">Acetyl esterase</fullName>
        <ecNumber evidence="2">3.1.1.-</ecNumber>
    </recommendedName>
</protein>
<organism>
    <name type="scientific">Salmonella enteritidis PT4 (strain P125109)</name>
    <dbReference type="NCBI Taxonomy" id="550537"/>
    <lineage>
        <taxon>Bacteria</taxon>
        <taxon>Pseudomonadati</taxon>
        <taxon>Pseudomonadota</taxon>
        <taxon>Gammaproteobacteria</taxon>
        <taxon>Enterobacterales</taxon>
        <taxon>Enterobacteriaceae</taxon>
        <taxon>Salmonella</taxon>
    </lineage>
</organism>
<keyword id="KW-0963">Cytoplasm</keyword>
<keyword id="KW-0378">Hydrolase</keyword>
<keyword id="KW-0719">Serine esterase</keyword>
<name>AES_SALEP</name>
<gene>
    <name evidence="2" type="primary">aes</name>
    <name type="ordered locus">SEN0471</name>
</gene>
<sequence>MKPENKIPVLTRLSDEMKAVVNFQQPGLPPWPADGDIETQRQYYLLERRFWNADAPSMTTRTCAVPTPYGDVTTRLYSPQPTSQATLYYLHGGGFILGNLDTHDRIMRLLARYTGCTVIGIDYSLSPQARYPQAIEETVAVCSYFSQHADEYSLNVEKIGFAGDSAGAMLALASALWLRDKHIRCGNVIAILLWYGLYGLQDSVSRRLFGGAWDGLTREDLDMYEKAYLRNDEDRESPWYCLFNNDLTRDVPPCFIASAEFDPLIDDSRLLHKTLQAHQQPCEYKMYPGTLHAFLHYSRMMTIADDALQDGARFFMARMKTPR</sequence>
<dbReference type="EC" id="3.1.1.-" evidence="2"/>
<dbReference type="EMBL" id="AM933172">
    <property type="protein sequence ID" value="CAR32057.1"/>
    <property type="molecule type" value="Genomic_DNA"/>
</dbReference>
<dbReference type="RefSeq" id="WP_000801777.1">
    <property type="nucleotide sequence ID" value="NC_011294.1"/>
</dbReference>
<dbReference type="SMR" id="B5QU79"/>
<dbReference type="ESTHER" id="salty-AES">
    <property type="family name" value="Acetyl_esterase"/>
</dbReference>
<dbReference type="KEGG" id="set:SEN0471"/>
<dbReference type="HOGENOM" id="CLU_012494_6_4_6"/>
<dbReference type="Proteomes" id="UP000000613">
    <property type="component" value="Chromosome"/>
</dbReference>
<dbReference type="GO" id="GO:0005737">
    <property type="term" value="C:cytoplasm"/>
    <property type="evidence" value="ECO:0007669"/>
    <property type="project" value="UniProtKB-SubCell"/>
</dbReference>
<dbReference type="GO" id="GO:0052689">
    <property type="term" value="F:carboxylic ester hydrolase activity"/>
    <property type="evidence" value="ECO:0007669"/>
    <property type="project" value="UniProtKB-UniRule"/>
</dbReference>
<dbReference type="FunFam" id="3.40.50.1820:FF:000035">
    <property type="entry name" value="Acetyl esterase"/>
    <property type="match status" value="1"/>
</dbReference>
<dbReference type="Gene3D" id="3.40.50.1820">
    <property type="entry name" value="alpha/beta hydrolase"/>
    <property type="match status" value="1"/>
</dbReference>
<dbReference type="HAMAP" id="MF_01958">
    <property type="entry name" value="Acetyl_esterase"/>
    <property type="match status" value="1"/>
</dbReference>
<dbReference type="InterPro" id="IPR013094">
    <property type="entry name" value="AB_hydrolase_3"/>
</dbReference>
<dbReference type="InterPro" id="IPR029058">
    <property type="entry name" value="AB_hydrolase_fold"/>
</dbReference>
<dbReference type="InterPro" id="IPR023508">
    <property type="entry name" value="Acetyl_esterase"/>
</dbReference>
<dbReference type="InterPro" id="IPR050300">
    <property type="entry name" value="GDXG_lipolytic_enzyme"/>
</dbReference>
<dbReference type="InterPro" id="IPR033140">
    <property type="entry name" value="Lipase_GDXG_put_SER_AS"/>
</dbReference>
<dbReference type="NCBIfam" id="NF007547">
    <property type="entry name" value="PRK10162.1"/>
    <property type="match status" value="1"/>
</dbReference>
<dbReference type="PANTHER" id="PTHR48081">
    <property type="entry name" value="AB HYDROLASE SUPERFAMILY PROTEIN C4A8.06C"/>
    <property type="match status" value="1"/>
</dbReference>
<dbReference type="PANTHER" id="PTHR48081:SF8">
    <property type="entry name" value="ALPHA_BETA HYDROLASE FOLD-3 DOMAIN-CONTAINING PROTEIN-RELATED"/>
    <property type="match status" value="1"/>
</dbReference>
<dbReference type="Pfam" id="PF07859">
    <property type="entry name" value="Abhydrolase_3"/>
    <property type="match status" value="1"/>
</dbReference>
<dbReference type="SUPFAM" id="SSF53474">
    <property type="entry name" value="alpha/beta-Hydrolases"/>
    <property type="match status" value="1"/>
</dbReference>
<dbReference type="PROSITE" id="PS01174">
    <property type="entry name" value="LIPASE_GDXG_SER"/>
    <property type="match status" value="1"/>
</dbReference>
<evidence type="ECO:0000250" key="1">
    <source>
        <dbReference type="UniProtKB" id="Q5NUF3"/>
    </source>
</evidence>
<evidence type="ECO:0000255" key="2">
    <source>
        <dbReference type="HAMAP-Rule" id="MF_01958"/>
    </source>
</evidence>
<feature type="chain" id="PRO_1000188992" description="Acetyl esterase">
    <location>
        <begin position="1"/>
        <end position="323"/>
    </location>
</feature>
<feature type="short sequence motif" description="Involved in the stabilization of the negatively charged intermediate by the formation of the oxyanion hole" evidence="1">
    <location>
        <begin position="91"/>
        <end position="93"/>
    </location>
</feature>
<feature type="active site" evidence="2">
    <location>
        <position position="165"/>
    </location>
</feature>
<feature type="active site" evidence="2">
    <location>
        <position position="262"/>
    </location>
</feature>
<feature type="active site" evidence="2">
    <location>
        <position position="292"/>
    </location>
</feature>
<proteinExistence type="inferred from homology"/>